<reference key="1">
    <citation type="submission" date="2006-08" db="EMBL/GenBank/DDBJ databases">
        <title>Complete sequence of chromosome 1 of Shewanella sp. MR-7.</title>
        <authorList>
            <person name="Copeland A."/>
            <person name="Lucas S."/>
            <person name="Lapidus A."/>
            <person name="Barry K."/>
            <person name="Detter J.C."/>
            <person name="Glavina del Rio T."/>
            <person name="Hammon N."/>
            <person name="Israni S."/>
            <person name="Dalin E."/>
            <person name="Tice H."/>
            <person name="Pitluck S."/>
            <person name="Kiss H."/>
            <person name="Brettin T."/>
            <person name="Bruce D."/>
            <person name="Han C."/>
            <person name="Tapia R."/>
            <person name="Gilna P."/>
            <person name="Schmutz J."/>
            <person name="Larimer F."/>
            <person name="Land M."/>
            <person name="Hauser L."/>
            <person name="Kyrpides N."/>
            <person name="Mikhailova N."/>
            <person name="Nealson K."/>
            <person name="Konstantinidis K."/>
            <person name="Klappenbach J."/>
            <person name="Tiedje J."/>
            <person name="Richardson P."/>
        </authorList>
    </citation>
    <scope>NUCLEOTIDE SEQUENCE [LARGE SCALE GENOMIC DNA]</scope>
    <source>
        <strain>MR-7</strain>
    </source>
</reference>
<name>MOAC_SHESR</name>
<evidence type="ECO:0000255" key="1">
    <source>
        <dbReference type="HAMAP-Rule" id="MF_01224"/>
    </source>
</evidence>
<keyword id="KW-0456">Lyase</keyword>
<keyword id="KW-0501">Molybdenum cofactor biosynthesis</keyword>
<dbReference type="EC" id="4.6.1.17" evidence="1"/>
<dbReference type="EMBL" id="CP000444">
    <property type="protein sequence ID" value="ABI44727.1"/>
    <property type="molecule type" value="Genomic_DNA"/>
</dbReference>
<dbReference type="SMR" id="Q0HQ78"/>
<dbReference type="KEGG" id="shm:Shewmr7_3747"/>
<dbReference type="HOGENOM" id="CLU_074693_1_1_6"/>
<dbReference type="UniPathway" id="UPA00344"/>
<dbReference type="GO" id="GO:0061799">
    <property type="term" value="F:cyclic pyranopterin monophosphate synthase activity"/>
    <property type="evidence" value="ECO:0007669"/>
    <property type="project" value="UniProtKB-UniRule"/>
</dbReference>
<dbReference type="GO" id="GO:0061798">
    <property type="term" value="F:GTP 3',8'-cyclase activity"/>
    <property type="evidence" value="ECO:0007669"/>
    <property type="project" value="TreeGrafter"/>
</dbReference>
<dbReference type="GO" id="GO:0006777">
    <property type="term" value="P:Mo-molybdopterin cofactor biosynthetic process"/>
    <property type="evidence" value="ECO:0007669"/>
    <property type="project" value="UniProtKB-UniRule"/>
</dbReference>
<dbReference type="CDD" id="cd01420">
    <property type="entry name" value="MoaC_PE"/>
    <property type="match status" value="1"/>
</dbReference>
<dbReference type="FunFam" id="3.30.70.640:FF:000001">
    <property type="entry name" value="Cyclic pyranopterin monophosphate synthase"/>
    <property type="match status" value="1"/>
</dbReference>
<dbReference type="Gene3D" id="3.30.70.640">
    <property type="entry name" value="Molybdopterin cofactor biosynthesis C (MoaC) domain"/>
    <property type="match status" value="1"/>
</dbReference>
<dbReference type="HAMAP" id="MF_01224_B">
    <property type="entry name" value="MoaC_B"/>
    <property type="match status" value="1"/>
</dbReference>
<dbReference type="InterPro" id="IPR023045">
    <property type="entry name" value="MoaC"/>
</dbReference>
<dbReference type="InterPro" id="IPR047594">
    <property type="entry name" value="MoaC_bact/euk"/>
</dbReference>
<dbReference type="InterPro" id="IPR036522">
    <property type="entry name" value="MoaC_sf"/>
</dbReference>
<dbReference type="InterPro" id="IPR050105">
    <property type="entry name" value="MoCo_biosynth_MoaA/MoaC"/>
</dbReference>
<dbReference type="InterPro" id="IPR002820">
    <property type="entry name" value="Mopterin_CF_biosynth-C_dom"/>
</dbReference>
<dbReference type="NCBIfam" id="TIGR00581">
    <property type="entry name" value="moaC"/>
    <property type="match status" value="1"/>
</dbReference>
<dbReference type="NCBIfam" id="NF006870">
    <property type="entry name" value="PRK09364.1"/>
    <property type="match status" value="1"/>
</dbReference>
<dbReference type="PANTHER" id="PTHR22960:SF0">
    <property type="entry name" value="MOLYBDENUM COFACTOR BIOSYNTHESIS PROTEIN 1"/>
    <property type="match status" value="1"/>
</dbReference>
<dbReference type="PANTHER" id="PTHR22960">
    <property type="entry name" value="MOLYBDOPTERIN COFACTOR SYNTHESIS PROTEIN A"/>
    <property type="match status" value="1"/>
</dbReference>
<dbReference type="Pfam" id="PF01967">
    <property type="entry name" value="MoaC"/>
    <property type="match status" value="1"/>
</dbReference>
<dbReference type="SUPFAM" id="SSF55040">
    <property type="entry name" value="Molybdenum cofactor biosynthesis protein C, MoaC"/>
    <property type="match status" value="1"/>
</dbReference>
<sequence>MSNVFTHINADGNAHMVDVTEKAVTEREARAEAFIEMASTTLEMIMSGSHHKGDVFATARIAGIQAAKKTSDLIPLCHPLMLTKVEVELEAQPEHNRVRITSLCKLSGKTGVEMEALTAASVAALTIYDMCKAVQKDMVISQVRLLEKRGGKSGHFKAE</sequence>
<accession>Q0HQ78</accession>
<feature type="chain" id="PRO_1000054141" description="Cyclic pyranopterin monophosphate synthase">
    <location>
        <begin position="1"/>
        <end position="159"/>
    </location>
</feature>
<feature type="active site" evidence="1">
    <location>
        <position position="129"/>
    </location>
</feature>
<feature type="binding site" evidence="1">
    <location>
        <begin position="76"/>
        <end position="78"/>
    </location>
    <ligand>
        <name>substrate</name>
    </ligand>
</feature>
<feature type="binding site" evidence="1">
    <location>
        <begin position="114"/>
        <end position="115"/>
    </location>
    <ligand>
        <name>substrate</name>
    </ligand>
</feature>
<gene>
    <name evidence="1" type="primary">moaC</name>
    <name type="ordered locus">Shewmr7_3747</name>
</gene>
<proteinExistence type="inferred from homology"/>
<comment type="function">
    <text evidence="1">Catalyzes the conversion of (8S)-3',8-cyclo-7,8-dihydroguanosine 5'-triphosphate to cyclic pyranopterin monophosphate (cPMP).</text>
</comment>
<comment type="catalytic activity">
    <reaction evidence="1">
        <text>(8S)-3',8-cyclo-7,8-dihydroguanosine 5'-triphosphate = cyclic pyranopterin phosphate + diphosphate</text>
        <dbReference type="Rhea" id="RHEA:49580"/>
        <dbReference type="ChEBI" id="CHEBI:33019"/>
        <dbReference type="ChEBI" id="CHEBI:59648"/>
        <dbReference type="ChEBI" id="CHEBI:131766"/>
        <dbReference type="EC" id="4.6.1.17"/>
    </reaction>
</comment>
<comment type="pathway">
    <text evidence="1">Cofactor biosynthesis; molybdopterin biosynthesis.</text>
</comment>
<comment type="subunit">
    <text evidence="1">Homohexamer; trimer of dimers.</text>
</comment>
<comment type="similarity">
    <text evidence="1">Belongs to the MoaC family.</text>
</comment>
<protein>
    <recommendedName>
        <fullName evidence="1">Cyclic pyranopterin monophosphate synthase</fullName>
        <ecNumber evidence="1">4.6.1.17</ecNumber>
    </recommendedName>
    <alternativeName>
        <fullName evidence="1">Molybdenum cofactor biosynthesis protein C</fullName>
    </alternativeName>
</protein>
<organism>
    <name type="scientific">Shewanella sp. (strain MR-7)</name>
    <dbReference type="NCBI Taxonomy" id="60481"/>
    <lineage>
        <taxon>Bacteria</taxon>
        <taxon>Pseudomonadati</taxon>
        <taxon>Pseudomonadota</taxon>
        <taxon>Gammaproteobacteria</taxon>
        <taxon>Alteromonadales</taxon>
        <taxon>Shewanellaceae</taxon>
        <taxon>Shewanella</taxon>
    </lineage>
</organism>